<evidence type="ECO:0000250" key="1"/>
<evidence type="ECO:0000250" key="2">
    <source>
        <dbReference type="UniProtKB" id="P01111"/>
    </source>
</evidence>
<evidence type="ECO:0000250" key="3">
    <source>
        <dbReference type="UniProtKB" id="P01112"/>
    </source>
</evidence>
<evidence type="ECO:0000250" key="4">
    <source>
        <dbReference type="UniProtKB" id="P01116"/>
    </source>
</evidence>
<evidence type="ECO:0000250" key="5">
    <source>
        <dbReference type="UniProtKB" id="Q04970"/>
    </source>
</evidence>
<evidence type="ECO:0000255" key="6"/>
<evidence type="ECO:0000305" key="7"/>
<keyword id="KW-0007">Acetylation</keyword>
<keyword id="KW-1003">Cell membrane</keyword>
<keyword id="KW-0333">Golgi apparatus</keyword>
<keyword id="KW-0342">GTP-binding</keyword>
<keyword id="KW-0378">Hydrolase</keyword>
<keyword id="KW-1017">Isopeptide bond</keyword>
<keyword id="KW-0449">Lipoprotein</keyword>
<keyword id="KW-0472">Membrane</keyword>
<keyword id="KW-0488">Methylation</keyword>
<keyword id="KW-0547">Nucleotide-binding</keyword>
<keyword id="KW-0564">Palmitate</keyword>
<keyword id="KW-0597">Phosphoprotein</keyword>
<keyword id="KW-0636">Prenylation</keyword>
<keyword id="KW-0656">Proto-oncogene</keyword>
<keyword id="KW-1185">Reference proteome</keyword>
<keyword id="KW-0832">Ubl conjugation</keyword>
<protein>
    <recommendedName>
        <fullName>GTPase NRas</fullName>
        <ecNumber evidence="4">3.6.5.2</ecNumber>
    </recommendedName>
    <alternativeName>
        <fullName>Transforming protein N-Ras</fullName>
    </alternativeName>
</protein>
<accession>Q95ME4</accession>
<gene>
    <name type="primary">NRAS</name>
</gene>
<dbReference type="EC" id="3.6.5.2" evidence="4"/>
<dbReference type="EMBL" id="AF397161">
    <property type="protein sequence ID" value="AAK84038.1"/>
    <property type="molecule type" value="mRNA"/>
</dbReference>
<dbReference type="RefSeq" id="NP_001028161.1">
    <property type="nucleotide sequence ID" value="NM_001032989.1"/>
</dbReference>
<dbReference type="RefSeq" id="XP_007485292.1">
    <property type="nucleotide sequence ID" value="XM_007485230.3"/>
</dbReference>
<dbReference type="RefSeq" id="XP_007485293.1">
    <property type="nucleotide sequence ID" value="XM_007485231.2"/>
</dbReference>
<dbReference type="SMR" id="Q95ME4"/>
<dbReference type="FunCoup" id="Q95ME4">
    <property type="interactions" value="1844"/>
</dbReference>
<dbReference type="STRING" id="13616.ENSMODP00000060203"/>
<dbReference type="Ensembl" id="ENSMODT00000005777.1">
    <property type="protein sequence ID" value="ENSMODP00000005658.1"/>
    <property type="gene ID" value="ENSMODG00000004590.2"/>
</dbReference>
<dbReference type="GeneID" id="554197"/>
<dbReference type="KEGG" id="mdo:554197"/>
<dbReference type="CTD" id="4893"/>
<dbReference type="eggNOG" id="KOG0395">
    <property type="taxonomic scope" value="Eukaryota"/>
</dbReference>
<dbReference type="GeneTree" id="ENSGT00940000158947"/>
<dbReference type="HOGENOM" id="CLU_041217_9_8_1"/>
<dbReference type="InParanoid" id="Q95ME4"/>
<dbReference type="OMA" id="RAVDIWG"/>
<dbReference type="OrthoDB" id="5976022at2759"/>
<dbReference type="TreeFam" id="TF312796"/>
<dbReference type="Proteomes" id="UP000002280">
    <property type="component" value="Chromosome 2"/>
</dbReference>
<dbReference type="Bgee" id="ENSMODG00000004590">
    <property type="expression patterns" value="Expressed in extraembryonic membrane and 21 other cell types or tissues"/>
</dbReference>
<dbReference type="GO" id="GO:0000139">
    <property type="term" value="C:Golgi membrane"/>
    <property type="evidence" value="ECO:0007669"/>
    <property type="project" value="UniProtKB-SubCell"/>
</dbReference>
<dbReference type="GO" id="GO:0005886">
    <property type="term" value="C:plasma membrane"/>
    <property type="evidence" value="ECO:0000318"/>
    <property type="project" value="GO_Central"/>
</dbReference>
<dbReference type="GO" id="GO:0003925">
    <property type="term" value="F:G protein activity"/>
    <property type="evidence" value="ECO:0007669"/>
    <property type="project" value="UniProtKB-EC"/>
</dbReference>
<dbReference type="GO" id="GO:0019003">
    <property type="term" value="F:GDP binding"/>
    <property type="evidence" value="ECO:0000318"/>
    <property type="project" value="GO_Central"/>
</dbReference>
<dbReference type="GO" id="GO:0005525">
    <property type="term" value="F:GTP binding"/>
    <property type="evidence" value="ECO:0000318"/>
    <property type="project" value="GO_Central"/>
</dbReference>
<dbReference type="GO" id="GO:0003924">
    <property type="term" value="F:GTPase activity"/>
    <property type="evidence" value="ECO:0000250"/>
    <property type="project" value="UniProtKB"/>
</dbReference>
<dbReference type="GO" id="GO:0007265">
    <property type="term" value="P:Ras protein signal transduction"/>
    <property type="evidence" value="ECO:0000250"/>
    <property type="project" value="UniProtKB"/>
</dbReference>
<dbReference type="CDD" id="cd04138">
    <property type="entry name" value="H_N_K_Ras_like"/>
    <property type="match status" value="1"/>
</dbReference>
<dbReference type="FunFam" id="3.40.50.300:FF:000096">
    <property type="entry name" value="KRAS proto-oncogene, GTPase"/>
    <property type="match status" value="1"/>
</dbReference>
<dbReference type="Gene3D" id="3.40.50.300">
    <property type="entry name" value="P-loop containing nucleotide triphosphate hydrolases"/>
    <property type="match status" value="1"/>
</dbReference>
<dbReference type="InterPro" id="IPR027417">
    <property type="entry name" value="P-loop_NTPase"/>
</dbReference>
<dbReference type="InterPro" id="IPR005225">
    <property type="entry name" value="Small_GTP-bd"/>
</dbReference>
<dbReference type="InterPro" id="IPR001806">
    <property type="entry name" value="Small_GTPase"/>
</dbReference>
<dbReference type="InterPro" id="IPR020849">
    <property type="entry name" value="Small_GTPase_Ras-type"/>
</dbReference>
<dbReference type="NCBIfam" id="TIGR00231">
    <property type="entry name" value="small_GTP"/>
    <property type="match status" value="1"/>
</dbReference>
<dbReference type="PANTHER" id="PTHR24070">
    <property type="entry name" value="RAS, DI-RAS, AND RHEB FAMILY MEMBERS OF SMALL GTPASE SUPERFAMILY"/>
    <property type="match status" value="1"/>
</dbReference>
<dbReference type="Pfam" id="PF00071">
    <property type="entry name" value="Ras"/>
    <property type="match status" value="1"/>
</dbReference>
<dbReference type="PRINTS" id="PR00449">
    <property type="entry name" value="RASTRNSFRMNG"/>
</dbReference>
<dbReference type="SMART" id="SM00175">
    <property type="entry name" value="RAB"/>
    <property type="match status" value="1"/>
</dbReference>
<dbReference type="SMART" id="SM00173">
    <property type="entry name" value="RAS"/>
    <property type="match status" value="1"/>
</dbReference>
<dbReference type="SMART" id="SM00174">
    <property type="entry name" value="RHO"/>
    <property type="match status" value="1"/>
</dbReference>
<dbReference type="SUPFAM" id="SSF52540">
    <property type="entry name" value="P-loop containing nucleoside triphosphate hydrolases"/>
    <property type="match status" value="1"/>
</dbReference>
<dbReference type="PROSITE" id="PS51421">
    <property type="entry name" value="RAS"/>
    <property type="match status" value="1"/>
</dbReference>
<proteinExistence type="evidence at transcript level"/>
<name>RASN_MONDO</name>
<feature type="chain" id="PRO_0000043008" description="GTPase NRas">
    <location>
        <begin position="1"/>
        <end position="186"/>
    </location>
</feature>
<feature type="propeptide" id="PRO_0000043009" description="Removed in mature form" evidence="1">
    <location>
        <begin position="187"/>
        <end position="189"/>
    </location>
</feature>
<feature type="region of interest" description="Hypervariable region" evidence="1">
    <location>
        <begin position="166"/>
        <end position="185"/>
    </location>
</feature>
<feature type="short sequence motif" description="Effector region">
    <location>
        <begin position="32"/>
        <end position="40"/>
    </location>
</feature>
<feature type="binding site" evidence="2">
    <location>
        <begin position="10"/>
        <end position="18"/>
    </location>
    <ligand>
        <name>GTP</name>
        <dbReference type="ChEBI" id="CHEBI:37565"/>
    </ligand>
</feature>
<feature type="binding site" evidence="2">
    <location>
        <begin position="29"/>
        <end position="30"/>
    </location>
    <ligand>
        <name>GTP</name>
        <dbReference type="ChEBI" id="CHEBI:37565"/>
    </ligand>
</feature>
<feature type="binding site" evidence="6">
    <location>
        <begin position="57"/>
        <end position="61"/>
    </location>
    <ligand>
        <name>GTP</name>
        <dbReference type="ChEBI" id="CHEBI:37565"/>
    </ligand>
</feature>
<feature type="binding site" evidence="2">
    <location>
        <begin position="116"/>
        <end position="119"/>
    </location>
    <ligand>
        <name>GTP</name>
        <dbReference type="ChEBI" id="CHEBI:37565"/>
    </ligand>
</feature>
<feature type="modified residue" description="Phosphoserine" evidence="2">
    <location>
        <position position="89"/>
    </location>
</feature>
<feature type="lipid moiety-binding region" description="S-palmitoyl cysteine" evidence="2">
    <location>
        <position position="181"/>
    </location>
</feature>
<feature type="lipid moiety-binding region" description="S-farnesyl cysteine" evidence="2">
    <location>
        <position position="186"/>
    </location>
</feature>
<feature type="cross-link" description="Glycyl lysine isopeptide (Lys-Gly) (interchain with G-Cter in ubiquitin)" evidence="2">
    <location>
        <position position="170"/>
    </location>
</feature>
<organism>
    <name type="scientific">Monodelphis domestica</name>
    <name type="common">Gray short-tailed opossum</name>
    <dbReference type="NCBI Taxonomy" id="13616"/>
    <lineage>
        <taxon>Eukaryota</taxon>
        <taxon>Metazoa</taxon>
        <taxon>Chordata</taxon>
        <taxon>Craniata</taxon>
        <taxon>Vertebrata</taxon>
        <taxon>Euteleostomi</taxon>
        <taxon>Mammalia</taxon>
        <taxon>Metatheria</taxon>
        <taxon>Didelphimorphia</taxon>
        <taxon>Didelphidae</taxon>
        <taxon>Monodelphis</taxon>
    </lineage>
</organism>
<sequence length="189" mass="21173">MTEYKLVVVGAGGVGKSALTIQLIQNHFVDEYDPTIEDSYRKQVVIDGETCLLDILDTAGQEEYSAMRDQYMRTGEGFLCVFAINNSKSFADINLYREQIKRVKDSDDVPMVLVGNKCDLPTRTVDTKQAHELAKSYGIPFIETSAKTRQGVEDAFYTLVREIRQYRMKKLNSSDDGTQGCLGLSCAVM</sequence>
<comment type="function">
    <text evidence="2">Ras proteins bind GDP/GTP and possess intrinsic GTPase activity.</text>
</comment>
<comment type="catalytic activity">
    <reaction evidence="4">
        <text>GTP + H2O = GDP + phosphate + H(+)</text>
        <dbReference type="Rhea" id="RHEA:19669"/>
        <dbReference type="ChEBI" id="CHEBI:15377"/>
        <dbReference type="ChEBI" id="CHEBI:15378"/>
        <dbReference type="ChEBI" id="CHEBI:37565"/>
        <dbReference type="ChEBI" id="CHEBI:43474"/>
        <dbReference type="ChEBI" id="CHEBI:58189"/>
        <dbReference type="EC" id="3.6.5.2"/>
    </reaction>
</comment>
<comment type="activity regulation">
    <text>Alternates between an inactive form bound to GDP and an active form bound to GTP. Activated by a guanine nucleotide-exchange factor (GEF) and inactivated by a GTPase-activating protein (GAP).</text>
</comment>
<comment type="subunit">
    <text evidence="2 5">Interacts (active GTP-bound form preferentially) with RGS14 (By similarity). Interacts (active GTP-bound form) with RASSF7 (By similarity). Interacts (active GTP-bound form) with both SHOC2 and PP1c (all isoforms) to form a tertiary complex; SHOC2 and PP1c preferably bind M-Ras/MRAS, but they also bind K-Ras/KRAS, N-Ras/NRAS and H-Ras/HRAS (By similarity).</text>
</comment>
<comment type="subcellular location">
    <subcellularLocation>
        <location evidence="2">Cell membrane</location>
        <topology evidence="2">Lipid-anchor</topology>
        <orientation evidence="2">Cytoplasmic side</orientation>
    </subcellularLocation>
    <subcellularLocation>
        <location evidence="2">Golgi apparatus membrane</location>
        <topology evidence="2">Lipid-anchor</topology>
    </subcellularLocation>
    <text evidence="2">Shuttles between the plasma membrane and the Golgi apparatus.</text>
</comment>
<comment type="PTM">
    <text evidence="2">Palmitoylated by the ZDHHC9-GOLGA7 complex. Depalmitoylated by ABHD17A, ABHD17B and ABHD17C. A continuous cycle of de- and re-palmitoylation regulates rapid exchange between plasma membrane and Golgi.</text>
</comment>
<comment type="PTM">
    <text evidence="4">Acetylation at Lys-104 prevents interaction with guanine nucleotide exchange factors (GEFs).</text>
</comment>
<comment type="PTM">
    <text evidence="3">Ubiquitinated by the BCR(LZTR1) E3 ubiquitin ligase complex at Lys-170 in a non-degradative manner, leading to inhibit Ras signaling by decreasing Ras association with membranes.</text>
</comment>
<comment type="PTM">
    <text evidence="2">Phosphorylation at Ser-89 enhances NRAS association with its downstream effectors.</text>
</comment>
<comment type="similarity">
    <text evidence="7">Belongs to the small GTPase superfamily. Ras family.</text>
</comment>
<reference key="1">
    <citation type="journal article" date="2002" name="Cancer Lett.">
        <title>Absence of ras gene mutations in UV-induced malignant melanomas correlates with a dermal origin of melanocytes in Monodelphis domestica.</title>
        <authorList>
            <person name="Chan J."/>
            <person name="Robinson E.S."/>
            <person name="Yeh I.-T."/>
            <person name="McCarrey J.R."/>
        </authorList>
    </citation>
    <scope>NUCLEOTIDE SEQUENCE [MRNA]</scope>
</reference>